<feature type="chain" id="PRO_0000171192" description="Serine/threonine-protein kinase PknD">
    <location>
        <begin position="1"/>
        <end position="932"/>
    </location>
</feature>
<feature type="domain" description="Protein kinase" evidence="1">
    <location>
        <begin position="4"/>
        <end position="291"/>
    </location>
</feature>
<feature type="active site" description="Proton acceptor" evidence="1">
    <location>
        <position position="138"/>
    </location>
</feature>
<feature type="binding site" evidence="1">
    <location>
        <begin position="10"/>
        <end position="18"/>
    </location>
    <ligand>
        <name>ATP</name>
        <dbReference type="ChEBI" id="CHEBI:30616"/>
    </ligand>
</feature>
<feature type="binding site" evidence="1">
    <location>
        <position position="33"/>
    </location>
    <ligand>
        <name>ATP</name>
        <dbReference type="ChEBI" id="CHEBI:30616"/>
    </ligand>
</feature>
<organism>
    <name type="scientific">Chlamydia pneumoniae</name>
    <name type="common">Chlamydophila pneumoniae</name>
    <dbReference type="NCBI Taxonomy" id="83558"/>
    <lineage>
        <taxon>Bacteria</taxon>
        <taxon>Pseudomonadati</taxon>
        <taxon>Chlamydiota</taxon>
        <taxon>Chlamydiia</taxon>
        <taxon>Chlamydiales</taxon>
        <taxon>Chlamydiaceae</taxon>
        <taxon>Chlamydia/Chlamydophila group</taxon>
        <taxon>Chlamydia</taxon>
    </lineage>
</organism>
<sequence length="932" mass="107410">MERYDIVRIIGKGGMGEVYLAYDPVCSRKVALKKIREDLAENPLLKRRFLREARIAADLIHPGVVPVYTIYSEKDPVYYTMPYIEGYTLKTLLKSVWQKESLSKELAEKTSVGAFLSIFHKICCTIEYVHSRGILHRDLKPDNILLGLFSEAVILDWGAAVACGEEEDLLDIDVSKEEVLSSRMTIPGRIVGTPDYMAPERLLGHPASKSTDIYALGVVLYQMLTLSFPYRRKKGKKIVLDGQRIPSPQEVAPYREIPPFLSAVVMRMLAVDPQERYSSVTELKEDIESHLKGSPKWTLTTALPPKKSSSWKLNEPILLSKYFPMLEVSPASWYSLAISNIESFSEMRLEYTLSKKGLNEGFGILLPTSENALGGDFYQGYGFWLHIKERTLSVSLVKNSLEIQRCSQDLESDKETFLIALEQHNHSLSLFVDGTTWLIHMNYLPSRSGRVAIIVRDMEDILEDIGIFESSGSLRVSCLAVPDAFLAEKLYDRALVLYRRIAESFPGRKEGYEARFRAGITVLEKASTDNNEQEFALAIEEFSKLHDGVAAPLEYLGKALVYQRLQEYNEEIKSLLLALKRYSQHPEIFRLKDHVVYRLHESFYKRDRLALVFMILVLEIAPQAITPGQEEKILVWLKDKSRATLFCLLDPTVLELRSSKMELFLSYWSGFIPHLNSLFHRAWDQSDVRALIEIFYVACDLHKWQFLSSCIDIFKESLEDQKATEEIVEFSFEDLGAFLFAIQSIFNKEDAEKIFVSNDQLSPILLVYIFDLFANRALLESQGEAIFQALDLIRSKVPENFYHDYLRNHEIRAHLWCRNEKALSTIFENYTEKQLKDEQHELFVLYGCYLALIQGAEAAKQHFDVCREDRIFPASLLARNYNRLGLPKDALSYQERRLLLRQKFLYFHCLGNHDERDLCQTMYHLLTEEFQL</sequence>
<comment type="function">
    <text evidence="1">Together with the serine/threonine kinase Pkn1, may play a role in the specific interactions with host proteins during intracellular growth.</text>
</comment>
<comment type="catalytic activity">
    <reaction evidence="1">
        <text>L-seryl-[protein] + ATP = O-phospho-L-seryl-[protein] + ADP + H(+)</text>
        <dbReference type="Rhea" id="RHEA:17989"/>
        <dbReference type="Rhea" id="RHEA-COMP:9863"/>
        <dbReference type="Rhea" id="RHEA-COMP:11604"/>
        <dbReference type="ChEBI" id="CHEBI:15378"/>
        <dbReference type="ChEBI" id="CHEBI:29999"/>
        <dbReference type="ChEBI" id="CHEBI:30616"/>
        <dbReference type="ChEBI" id="CHEBI:83421"/>
        <dbReference type="ChEBI" id="CHEBI:456216"/>
        <dbReference type="EC" id="2.7.11.1"/>
    </reaction>
</comment>
<comment type="catalytic activity">
    <reaction evidence="1">
        <text>L-threonyl-[protein] + ATP = O-phospho-L-threonyl-[protein] + ADP + H(+)</text>
        <dbReference type="Rhea" id="RHEA:46608"/>
        <dbReference type="Rhea" id="RHEA-COMP:11060"/>
        <dbReference type="Rhea" id="RHEA-COMP:11605"/>
        <dbReference type="ChEBI" id="CHEBI:15378"/>
        <dbReference type="ChEBI" id="CHEBI:30013"/>
        <dbReference type="ChEBI" id="CHEBI:30616"/>
        <dbReference type="ChEBI" id="CHEBI:61977"/>
        <dbReference type="ChEBI" id="CHEBI:456216"/>
        <dbReference type="EC" id="2.7.11.1"/>
    </reaction>
</comment>
<comment type="PTM">
    <text evidence="1">Autophosphorylated on serine and threonine residues.</text>
</comment>
<comment type="similarity">
    <text evidence="1">Belongs to the protein kinase superfamily. Ser/Thr protein kinase family.</text>
</comment>
<comment type="sequence caution" evidence="2">
    <conflict type="erroneous initiation">
        <sequence resource="EMBL-CDS" id="AAD18248"/>
    </conflict>
</comment>
<comment type="sequence caution" evidence="2">
    <conflict type="erroneous initiation">
        <sequence resource="EMBL-CDS" id="BAA98305"/>
    </conflict>
</comment>
<reference key="1">
    <citation type="journal article" date="1999" name="Nat. Genet.">
        <title>Comparative genomes of Chlamydia pneumoniae and C. trachomatis.</title>
        <authorList>
            <person name="Kalman S."/>
            <person name="Mitchell W.P."/>
            <person name="Marathe R."/>
            <person name="Lammel C.J."/>
            <person name="Fan J."/>
            <person name="Hyman R.W."/>
            <person name="Olinger L."/>
            <person name="Grimwood J."/>
            <person name="Davis R.W."/>
            <person name="Stephens R.S."/>
        </authorList>
    </citation>
    <scope>NUCLEOTIDE SEQUENCE [LARGE SCALE GENOMIC DNA]</scope>
    <source>
        <strain>CWL029</strain>
    </source>
</reference>
<reference key="2">
    <citation type="journal article" date="2000" name="Nucleic Acids Res.">
        <title>Genome sequences of Chlamydia trachomatis MoPn and Chlamydia pneumoniae AR39.</title>
        <authorList>
            <person name="Read T.D."/>
            <person name="Brunham R.C."/>
            <person name="Shen C."/>
            <person name="Gill S.R."/>
            <person name="Heidelberg J.F."/>
            <person name="White O."/>
            <person name="Hickey E.K."/>
            <person name="Peterson J.D."/>
            <person name="Utterback T.R."/>
            <person name="Berry K.J."/>
            <person name="Bass S."/>
            <person name="Linher K.D."/>
            <person name="Weidman J.F."/>
            <person name="Khouri H.M."/>
            <person name="Craven B."/>
            <person name="Bowman C."/>
            <person name="Dodson R.J."/>
            <person name="Gwinn M.L."/>
            <person name="Nelson W.C."/>
            <person name="DeBoy R.T."/>
            <person name="Kolonay J.F."/>
            <person name="McClarty G."/>
            <person name="Salzberg S.L."/>
            <person name="Eisen J.A."/>
            <person name="Fraser C.M."/>
        </authorList>
    </citation>
    <scope>NUCLEOTIDE SEQUENCE [LARGE SCALE GENOMIC DNA]</scope>
    <source>
        <strain>AR39</strain>
    </source>
</reference>
<reference key="3">
    <citation type="journal article" date="2000" name="Nucleic Acids Res.">
        <title>Comparison of whole genome sequences of Chlamydia pneumoniae J138 from Japan and CWL029 from USA.</title>
        <authorList>
            <person name="Shirai M."/>
            <person name="Hirakawa H."/>
            <person name="Kimoto M."/>
            <person name="Tabuchi M."/>
            <person name="Kishi F."/>
            <person name="Ouchi K."/>
            <person name="Shiba T."/>
            <person name="Ishii K."/>
            <person name="Hattori M."/>
            <person name="Kuhara S."/>
            <person name="Nakazawa T."/>
        </authorList>
    </citation>
    <scope>NUCLEOTIDE SEQUENCE [LARGE SCALE GENOMIC DNA]</scope>
    <source>
        <strain>J138</strain>
    </source>
</reference>
<reference key="4">
    <citation type="submission" date="2002-05" db="EMBL/GenBank/DDBJ databases">
        <title>The genome sequence of Chlamydia pneumoniae TW183 and comparison with other Chlamydia strains based on whole genome sequence analysis.</title>
        <authorList>
            <person name="Geng M.M."/>
            <person name="Schuhmacher A."/>
            <person name="Muehldorfer I."/>
            <person name="Bensch K.W."/>
            <person name="Schaefer K.P."/>
            <person name="Schneider S."/>
            <person name="Pohl T."/>
            <person name="Essig A."/>
            <person name="Marre R."/>
            <person name="Melchers K."/>
        </authorList>
    </citation>
    <scope>NUCLEOTIDE SEQUENCE [LARGE SCALE GENOMIC DNA]</scope>
    <source>
        <strain>TW-183</strain>
    </source>
</reference>
<protein>
    <recommendedName>
        <fullName evidence="1">Serine/threonine-protein kinase PknD</fullName>
        <ecNumber evidence="1">2.7.11.1</ecNumber>
    </recommendedName>
</protein>
<gene>
    <name evidence="1" type="primary">pknD</name>
    <name type="ordered locus">CPn_0095</name>
    <name type="ordered locus">CP_0679</name>
    <name type="ordered locus">CPj0095</name>
    <name type="ordered locus">CpB0095</name>
</gene>
<dbReference type="EC" id="2.7.11.1" evidence="1"/>
<dbReference type="EMBL" id="AE001363">
    <property type="protein sequence ID" value="AAD18248.1"/>
    <property type="status" value="ALT_INIT"/>
    <property type="molecule type" value="Genomic_DNA"/>
</dbReference>
<dbReference type="EMBL" id="AE002161">
    <property type="protein sequence ID" value="AAF73695.1"/>
    <property type="molecule type" value="Genomic_DNA"/>
</dbReference>
<dbReference type="EMBL" id="BA000008">
    <property type="protein sequence ID" value="BAA98305.1"/>
    <property type="status" value="ALT_INIT"/>
    <property type="molecule type" value="Genomic_DNA"/>
</dbReference>
<dbReference type="EMBL" id="AE009440">
    <property type="protein sequence ID" value="AAP98028.1"/>
    <property type="molecule type" value="Genomic_DNA"/>
</dbReference>
<dbReference type="PIR" id="C72120">
    <property type="entry name" value="C72120"/>
</dbReference>
<dbReference type="PIR" id="G86502">
    <property type="entry name" value="G86502"/>
</dbReference>
<dbReference type="RefSeq" id="WP_010882745.1">
    <property type="nucleotide sequence ID" value="NZ_LN847257.1"/>
</dbReference>
<dbReference type="SMR" id="Q9Z986"/>
<dbReference type="STRING" id="406984.CPK_ORF00605"/>
<dbReference type="GeneID" id="45050140"/>
<dbReference type="KEGG" id="cpa:CP_0679"/>
<dbReference type="KEGG" id="cpj:CPj0095"/>
<dbReference type="KEGG" id="cpn:CPn_0095"/>
<dbReference type="KEGG" id="cpt:CpB0095"/>
<dbReference type="eggNOG" id="COG0515">
    <property type="taxonomic scope" value="Bacteria"/>
</dbReference>
<dbReference type="HOGENOM" id="CLU_303227_0_0_0"/>
<dbReference type="OrthoDB" id="9788659at2"/>
<dbReference type="Proteomes" id="UP000000583">
    <property type="component" value="Chromosome"/>
</dbReference>
<dbReference type="Proteomes" id="UP000000801">
    <property type="component" value="Chromosome"/>
</dbReference>
<dbReference type="GO" id="GO:0005524">
    <property type="term" value="F:ATP binding"/>
    <property type="evidence" value="ECO:0007669"/>
    <property type="project" value="UniProtKB-KW"/>
</dbReference>
<dbReference type="GO" id="GO:0106310">
    <property type="term" value="F:protein serine kinase activity"/>
    <property type="evidence" value="ECO:0007669"/>
    <property type="project" value="RHEA"/>
</dbReference>
<dbReference type="GO" id="GO:0004674">
    <property type="term" value="F:protein serine/threonine kinase activity"/>
    <property type="evidence" value="ECO:0007669"/>
    <property type="project" value="UniProtKB-UniRule"/>
</dbReference>
<dbReference type="CDD" id="cd14014">
    <property type="entry name" value="STKc_PknB_like"/>
    <property type="match status" value="1"/>
</dbReference>
<dbReference type="Gene3D" id="3.30.200.20">
    <property type="entry name" value="Phosphorylase Kinase, domain 1"/>
    <property type="match status" value="1"/>
</dbReference>
<dbReference type="Gene3D" id="1.25.40.10">
    <property type="entry name" value="Tetratricopeptide repeat domain"/>
    <property type="match status" value="1"/>
</dbReference>
<dbReference type="Gene3D" id="1.10.510.10">
    <property type="entry name" value="Transferase(Phosphotransferase) domain 1"/>
    <property type="match status" value="1"/>
</dbReference>
<dbReference type="HAMAP" id="MF_01957">
    <property type="entry name" value="PknD_kinase"/>
    <property type="match status" value="1"/>
</dbReference>
<dbReference type="InterPro" id="IPR011009">
    <property type="entry name" value="Kinase-like_dom_sf"/>
</dbReference>
<dbReference type="InterPro" id="IPR000719">
    <property type="entry name" value="Prot_kinase_dom"/>
</dbReference>
<dbReference type="InterPro" id="IPR017441">
    <property type="entry name" value="Protein_kinase_ATP_BS"/>
</dbReference>
<dbReference type="InterPro" id="IPR008271">
    <property type="entry name" value="Ser/Thr_kinase_AS"/>
</dbReference>
<dbReference type="InterPro" id="IPR023507">
    <property type="entry name" value="Ser/Thr_kinase_PknD"/>
</dbReference>
<dbReference type="InterPro" id="IPR011990">
    <property type="entry name" value="TPR-like_helical_dom_sf"/>
</dbReference>
<dbReference type="NCBIfam" id="NF009651">
    <property type="entry name" value="PRK13184.1"/>
    <property type="match status" value="1"/>
</dbReference>
<dbReference type="PANTHER" id="PTHR43289">
    <property type="entry name" value="MITOGEN-ACTIVATED PROTEIN KINASE KINASE KINASE 20-RELATED"/>
    <property type="match status" value="1"/>
</dbReference>
<dbReference type="PANTHER" id="PTHR43289:SF34">
    <property type="entry name" value="SERINE_THREONINE-PROTEIN KINASE YBDM-RELATED"/>
    <property type="match status" value="1"/>
</dbReference>
<dbReference type="Pfam" id="PF00069">
    <property type="entry name" value="Pkinase"/>
    <property type="match status" value="1"/>
</dbReference>
<dbReference type="SMART" id="SM00220">
    <property type="entry name" value="S_TKc"/>
    <property type="match status" value="1"/>
</dbReference>
<dbReference type="SUPFAM" id="SSF56112">
    <property type="entry name" value="Protein kinase-like (PK-like)"/>
    <property type="match status" value="1"/>
</dbReference>
<dbReference type="PROSITE" id="PS00107">
    <property type="entry name" value="PROTEIN_KINASE_ATP"/>
    <property type="match status" value="1"/>
</dbReference>
<dbReference type="PROSITE" id="PS50011">
    <property type="entry name" value="PROTEIN_KINASE_DOM"/>
    <property type="match status" value="1"/>
</dbReference>
<dbReference type="PROSITE" id="PS00108">
    <property type="entry name" value="PROTEIN_KINASE_ST"/>
    <property type="match status" value="1"/>
</dbReference>
<proteinExistence type="inferred from homology"/>
<keyword id="KW-0067">ATP-binding</keyword>
<keyword id="KW-0418">Kinase</keyword>
<keyword id="KW-0547">Nucleotide-binding</keyword>
<keyword id="KW-0597">Phosphoprotein</keyword>
<keyword id="KW-0723">Serine/threonine-protein kinase</keyword>
<keyword id="KW-0808">Transferase</keyword>
<evidence type="ECO:0000255" key="1">
    <source>
        <dbReference type="HAMAP-Rule" id="MF_01957"/>
    </source>
</evidence>
<evidence type="ECO:0000305" key="2"/>
<name>PKND_CHLPN</name>
<accession>Q9Z986</accession>
<accession>Q9K216</accession>